<feature type="chain" id="PRO_0000380331" description="DNA ligase">
    <location>
        <begin position="1"/>
        <end position="681"/>
    </location>
</feature>
<feature type="domain" description="BRCT" evidence="1">
    <location>
        <begin position="602"/>
        <end position="681"/>
    </location>
</feature>
<feature type="active site" description="N6-AMP-lysine intermediate" evidence="1">
    <location>
        <position position="117"/>
    </location>
</feature>
<feature type="binding site" evidence="1">
    <location>
        <begin position="34"/>
        <end position="38"/>
    </location>
    <ligand>
        <name>NAD(+)</name>
        <dbReference type="ChEBI" id="CHEBI:57540"/>
    </ligand>
</feature>
<feature type="binding site" evidence="1">
    <location>
        <begin position="83"/>
        <end position="84"/>
    </location>
    <ligand>
        <name>NAD(+)</name>
        <dbReference type="ChEBI" id="CHEBI:57540"/>
    </ligand>
</feature>
<feature type="binding site" evidence="1">
    <location>
        <position position="115"/>
    </location>
    <ligand>
        <name>NAD(+)</name>
        <dbReference type="ChEBI" id="CHEBI:57540"/>
    </ligand>
</feature>
<feature type="binding site" evidence="1">
    <location>
        <position position="138"/>
    </location>
    <ligand>
        <name>NAD(+)</name>
        <dbReference type="ChEBI" id="CHEBI:57540"/>
    </ligand>
</feature>
<feature type="binding site" evidence="1">
    <location>
        <position position="185"/>
    </location>
    <ligand>
        <name>NAD(+)</name>
        <dbReference type="ChEBI" id="CHEBI:57540"/>
    </ligand>
</feature>
<feature type="binding site" evidence="1">
    <location>
        <position position="301"/>
    </location>
    <ligand>
        <name>NAD(+)</name>
        <dbReference type="ChEBI" id="CHEBI:57540"/>
    </ligand>
</feature>
<feature type="binding site" evidence="1">
    <location>
        <position position="325"/>
    </location>
    <ligand>
        <name>NAD(+)</name>
        <dbReference type="ChEBI" id="CHEBI:57540"/>
    </ligand>
</feature>
<feature type="binding site" evidence="1">
    <location>
        <position position="419"/>
    </location>
    <ligand>
        <name>Zn(2+)</name>
        <dbReference type="ChEBI" id="CHEBI:29105"/>
    </ligand>
</feature>
<feature type="binding site" evidence="1">
    <location>
        <position position="422"/>
    </location>
    <ligand>
        <name>Zn(2+)</name>
        <dbReference type="ChEBI" id="CHEBI:29105"/>
    </ligand>
</feature>
<feature type="binding site" evidence="1">
    <location>
        <position position="437"/>
    </location>
    <ligand>
        <name>Zn(2+)</name>
        <dbReference type="ChEBI" id="CHEBI:29105"/>
    </ligand>
</feature>
<feature type="binding site" evidence="1">
    <location>
        <position position="443"/>
    </location>
    <ligand>
        <name>Zn(2+)</name>
        <dbReference type="ChEBI" id="CHEBI:29105"/>
    </ligand>
</feature>
<organism>
    <name type="scientific">Chloroflexus aggregans (strain MD-66 / DSM 9485)</name>
    <dbReference type="NCBI Taxonomy" id="326427"/>
    <lineage>
        <taxon>Bacteria</taxon>
        <taxon>Bacillati</taxon>
        <taxon>Chloroflexota</taxon>
        <taxon>Chloroflexia</taxon>
        <taxon>Chloroflexales</taxon>
        <taxon>Chloroflexineae</taxon>
        <taxon>Chloroflexaceae</taxon>
        <taxon>Chloroflexus</taxon>
    </lineage>
</organism>
<accession>B8GAC1</accession>
<name>DNLJ_CHLAD</name>
<proteinExistence type="inferred from homology"/>
<comment type="function">
    <text evidence="1">DNA ligase that catalyzes the formation of phosphodiester linkages between 5'-phosphoryl and 3'-hydroxyl groups in double-stranded DNA using NAD as a coenzyme and as the energy source for the reaction. It is essential for DNA replication and repair of damaged DNA.</text>
</comment>
<comment type="catalytic activity">
    <reaction evidence="1">
        <text>NAD(+) + (deoxyribonucleotide)n-3'-hydroxyl + 5'-phospho-(deoxyribonucleotide)m = (deoxyribonucleotide)n+m + AMP + beta-nicotinamide D-nucleotide.</text>
        <dbReference type="EC" id="6.5.1.2"/>
    </reaction>
</comment>
<comment type="cofactor">
    <cofactor evidence="1">
        <name>Mg(2+)</name>
        <dbReference type="ChEBI" id="CHEBI:18420"/>
    </cofactor>
    <cofactor evidence="1">
        <name>Mn(2+)</name>
        <dbReference type="ChEBI" id="CHEBI:29035"/>
    </cofactor>
</comment>
<comment type="similarity">
    <text evidence="1">Belongs to the NAD-dependent DNA ligase family. LigA subfamily.</text>
</comment>
<protein>
    <recommendedName>
        <fullName evidence="1">DNA ligase</fullName>
        <ecNumber evidence="1">6.5.1.2</ecNumber>
    </recommendedName>
    <alternativeName>
        <fullName evidence="1">Polydeoxyribonucleotide synthase [NAD(+)]</fullName>
    </alternativeName>
</protein>
<sequence>MNHIDVTQRINELRTLIRRYDYHYYVLDDPIVSDAEYDALMNELRALEAAHPELITPDSPTQRVSGTPASQFAKVQHPQPMLSLGNAFTTTDLLAWRDRVLRLLGQDTAVAYVVEPKIDGLAVALTYHDGQFVQGATRGDGEVGEDVTANLRTISSIPLLLHPPDGGHDRDVPTALPSLIEVRGEVYMRTADFEALNDRLAAAGEKIFANPRNAAAGSLRQKDPAITAARPLRFFAYGVGPVEGVELTGQWQTLRYLRMLGFPVNQDVRRFTDFDEVLAYCEQWMARRDELTYEADGMVIKIDDFAQQRELGVVGRDPRWAIAFKFPPREAITRLLNITVNVGRTGVVTPNAELEPVQIGGVIVRNASLHNADYIAQRDIRIGDYVIVKRAGDVIPYVVGPVVARRDGSERPWQFPTHCPACGSPLEREPGEAAWRCNNFGICPAQLVRRLEHFASRAALDIVGLGERQAELFVQRGLVRDVADLFYLKAEDFAGLEGFGPKRIANLLNAIDAARQRPLDRLIVGLGIRYVGSVAAQALVNSLGSLDAIMNARQEELEQIPGIGPVVAASIVDFFAHPENRQLIEKLRAAGVQMNAGPQRERKSDVLAGQTFVLTGTLPSLTREQASALIIAHGGKVTDSVSKKTNYVVAGVNAGSKLAKAQQLGIPVLDEAALLALIGER</sequence>
<keyword id="KW-0227">DNA damage</keyword>
<keyword id="KW-0234">DNA repair</keyword>
<keyword id="KW-0235">DNA replication</keyword>
<keyword id="KW-0436">Ligase</keyword>
<keyword id="KW-0460">Magnesium</keyword>
<keyword id="KW-0464">Manganese</keyword>
<keyword id="KW-0479">Metal-binding</keyword>
<keyword id="KW-0520">NAD</keyword>
<keyword id="KW-0862">Zinc</keyword>
<evidence type="ECO:0000255" key="1">
    <source>
        <dbReference type="HAMAP-Rule" id="MF_01588"/>
    </source>
</evidence>
<reference key="1">
    <citation type="submission" date="2008-12" db="EMBL/GenBank/DDBJ databases">
        <title>Complete sequence of Chloroflexus aggregans DSM 9485.</title>
        <authorList>
            <consortium name="US DOE Joint Genome Institute"/>
            <person name="Lucas S."/>
            <person name="Copeland A."/>
            <person name="Lapidus A."/>
            <person name="Glavina del Rio T."/>
            <person name="Dalin E."/>
            <person name="Tice H."/>
            <person name="Pitluck S."/>
            <person name="Foster B."/>
            <person name="Larimer F."/>
            <person name="Land M."/>
            <person name="Hauser L."/>
            <person name="Kyrpides N."/>
            <person name="Mikhailova N."/>
            <person name="Bryant D.A."/>
            <person name="Richardson P."/>
        </authorList>
    </citation>
    <scope>NUCLEOTIDE SEQUENCE [LARGE SCALE GENOMIC DNA]</scope>
    <source>
        <strain>MD-66 / DSM 9485</strain>
    </source>
</reference>
<dbReference type="EC" id="6.5.1.2" evidence="1"/>
<dbReference type="EMBL" id="CP001337">
    <property type="protein sequence ID" value="ACL26496.1"/>
    <property type="molecule type" value="Genomic_DNA"/>
</dbReference>
<dbReference type="RefSeq" id="WP_015942341.1">
    <property type="nucleotide sequence ID" value="NC_011831.1"/>
</dbReference>
<dbReference type="SMR" id="B8GAC1"/>
<dbReference type="STRING" id="326427.Cagg_3660"/>
<dbReference type="KEGG" id="cag:Cagg_3660"/>
<dbReference type="eggNOG" id="COG0272">
    <property type="taxonomic scope" value="Bacteria"/>
</dbReference>
<dbReference type="HOGENOM" id="CLU_007764_2_1_0"/>
<dbReference type="OrthoDB" id="9759736at2"/>
<dbReference type="Proteomes" id="UP000002508">
    <property type="component" value="Chromosome"/>
</dbReference>
<dbReference type="GO" id="GO:0005829">
    <property type="term" value="C:cytosol"/>
    <property type="evidence" value="ECO:0007669"/>
    <property type="project" value="TreeGrafter"/>
</dbReference>
<dbReference type="GO" id="GO:0003677">
    <property type="term" value="F:DNA binding"/>
    <property type="evidence" value="ECO:0007669"/>
    <property type="project" value="InterPro"/>
</dbReference>
<dbReference type="GO" id="GO:0003911">
    <property type="term" value="F:DNA ligase (NAD+) activity"/>
    <property type="evidence" value="ECO:0007669"/>
    <property type="project" value="UniProtKB-UniRule"/>
</dbReference>
<dbReference type="GO" id="GO:0046872">
    <property type="term" value="F:metal ion binding"/>
    <property type="evidence" value="ECO:0007669"/>
    <property type="project" value="UniProtKB-KW"/>
</dbReference>
<dbReference type="GO" id="GO:0006281">
    <property type="term" value="P:DNA repair"/>
    <property type="evidence" value="ECO:0007669"/>
    <property type="project" value="UniProtKB-KW"/>
</dbReference>
<dbReference type="GO" id="GO:0006260">
    <property type="term" value="P:DNA replication"/>
    <property type="evidence" value="ECO:0007669"/>
    <property type="project" value="UniProtKB-KW"/>
</dbReference>
<dbReference type="CDD" id="cd00114">
    <property type="entry name" value="LIGANc"/>
    <property type="match status" value="1"/>
</dbReference>
<dbReference type="FunFam" id="1.10.150.20:FF:000006">
    <property type="entry name" value="DNA ligase"/>
    <property type="match status" value="1"/>
</dbReference>
<dbReference type="FunFam" id="1.10.150.20:FF:000007">
    <property type="entry name" value="DNA ligase"/>
    <property type="match status" value="1"/>
</dbReference>
<dbReference type="FunFam" id="1.10.287.610:FF:000002">
    <property type="entry name" value="DNA ligase"/>
    <property type="match status" value="1"/>
</dbReference>
<dbReference type="FunFam" id="2.40.50.140:FF:000012">
    <property type="entry name" value="DNA ligase"/>
    <property type="match status" value="1"/>
</dbReference>
<dbReference type="FunFam" id="3.30.470.30:FF:000001">
    <property type="entry name" value="DNA ligase"/>
    <property type="match status" value="1"/>
</dbReference>
<dbReference type="FunFam" id="6.20.10.30:FF:000007">
    <property type="entry name" value="DNA ligase"/>
    <property type="match status" value="1"/>
</dbReference>
<dbReference type="Gene3D" id="6.20.10.30">
    <property type="match status" value="1"/>
</dbReference>
<dbReference type="Gene3D" id="1.10.150.20">
    <property type="entry name" value="5' to 3' exonuclease, C-terminal subdomain"/>
    <property type="match status" value="2"/>
</dbReference>
<dbReference type="Gene3D" id="3.40.50.10190">
    <property type="entry name" value="BRCT domain"/>
    <property type="match status" value="1"/>
</dbReference>
<dbReference type="Gene3D" id="3.30.470.30">
    <property type="entry name" value="DNA ligase/mRNA capping enzyme"/>
    <property type="match status" value="1"/>
</dbReference>
<dbReference type="Gene3D" id="1.10.287.610">
    <property type="entry name" value="Helix hairpin bin"/>
    <property type="match status" value="1"/>
</dbReference>
<dbReference type="Gene3D" id="2.40.50.140">
    <property type="entry name" value="Nucleic acid-binding proteins"/>
    <property type="match status" value="1"/>
</dbReference>
<dbReference type="HAMAP" id="MF_01588">
    <property type="entry name" value="DNA_ligase_A"/>
    <property type="match status" value="1"/>
</dbReference>
<dbReference type="InterPro" id="IPR001357">
    <property type="entry name" value="BRCT_dom"/>
</dbReference>
<dbReference type="InterPro" id="IPR036420">
    <property type="entry name" value="BRCT_dom_sf"/>
</dbReference>
<dbReference type="InterPro" id="IPR041663">
    <property type="entry name" value="DisA/LigA_HHH"/>
</dbReference>
<dbReference type="InterPro" id="IPR001679">
    <property type="entry name" value="DNA_ligase"/>
</dbReference>
<dbReference type="InterPro" id="IPR018239">
    <property type="entry name" value="DNA_ligase_AS"/>
</dbReference>
<dbReference type="InterPro" id="IPR013839">
    <property type="entry name" value="DNAligase_adenylation"/>
</dbReference>
<dbReference type="InterPro" id="IPR013840">
    <property type="entry name" value="DNAligase_N"/>
</dbReference>
<dbReference type="InterPro" id="IPR003583">
    <property type="entry name" value="Hlx-hairpin-Hlx_DNA-bd_motif"/>
</dbReference>
<dbReference type="InterPro" id="IPR012340">
    <property type="entry name" value="NA-bd_OB-fold"/>
</dbReference>
<dbReference type="InterPro" id="IPR004150">
    <property type="entry name" value="NAD_DNA_ligase_OB"/>
</dbReference>
<dbReference type="InterPro" id="IPR010994">
    <property type="entry name" value="RuvA_2-like"/>
</dbReference>
<dbReference type="InterPro" id="IPR004149">
    <property type="entry name" value="Znf_DNAligase_C4"/>
</dbReference>
<dbReference type="NCBIfam" id="TIGR00575">
    <property type="entry name" value="dnlj"/>
    <property type="match status" value="1"/>
</dbReference>
<dbReference type="NCBIfam" id="NF005932">
    <property type="entry name" value="PRK07956.1"/>
    <property type="match status" value="1"/>
</dbReference>
<dbReference type="PANTHER" id="PTHR23389">
    <property type="entry name" value="CHROMOSOME TRANSMISSION FIDELITY FACTOR 18"/>
    <property type="match status" value="1"/>
</dbReference>
<dbReference type="PANTHER" id="PTHR23389:SF9">
    <property type="entry name" value="DNA LIGASE"/>
    <property type="match status" value="1"/>
</dbReference>
<dbReference type="Pfam" id="PF00533">
    <property type="entry name" value="BRCT"/>
    <property type="match status" value="1"/>
</dbReference>
<dbReference type="Pfam" id="PF01653">
    <property type="entry name" value="DNA_ligase_aden"/>
    <property type="match status" value="1"/>
</dbReference>
<dbReference type="Pfam" id="PF03120">
    <property type="entry name" value="DNA_ligase_OB"/>
    <property type="match status" value="1"/>
</dbReference>
<dbReference type="Pfam" id="PF03119">
    <property type="entry name" value="DNA_ligase_ZBD"/>
    <property type="match status" value="1"/>
</dbReference>
<dbReference type="Pfam" id="PF12826">
    <property type="entry name" value="HHH_2"/>
    <property type="match status" value="1"/>
</dbReference>
<dbReference type="Pfam" id="PF22745">
    <property type="entry name" value="Nlig-Ia"/>
    <property type="match status" value="1"/>
</dbReference>
<dbReference type="PIRSF" id="PIRSF001604">
    <property type="entry name" value="LigA"/>
    <property type="match status" value="1"/>
</dbReference>
<dbReference type="SMART" id="SM00292">
    <property type="entry name" value="BRCT"/>
    <property type="match status" value="1"/>
</dbReference>
<dbReference type="SMART" id="SM00278">
    <property type="entry name" value="HhH1"/>
    <property type="match status" value="2"/>
</dbReference>
<dbReference type="SMART" id="SM00532">
    <property type="entry name" value="LIGANc"/>
    <property type="match status" value="1"/>
</dbReference>
<dbReference type="SUPFAM" id="SSF52113">
    <property type="entry name" value="BRCT domain"/>
    <property type="match status" value="1"/>
</dbReference>
<dbReference type="SUPFAM" id="SSF56091">
    <property type="entry name" value="DNA ligase/mRNA capping enzyme, catalytic domain"/>
    <property type="match status" value="1"/>
</dbReference>
<dbReference type="SUPFAM" id="SSF50249">
    <property type="entry name" value="Nucleic acid-binding proteins"/>
    <property type="match status" value="1"/>
</dbReference>
<dbReference type="SUPFAM" id="SSF47781">
    <property type="entry name" value="RuvA domain 2-like"/>
    <property type="match status" value="1"/>
</dbReference>
<dbReference type="PROSITE" id="PS50172">
    <property type="entry name" value="BRCT"/>
    <property type="match status" value="1"/>
</dbReference>
<dbReference type="PROSITE" id="PS01055">
    <property type="entry name" value="DNA_LIGASE_N1"/>
    <property type="match status" value="1"/>
</dbReference>
<gene>
    <name evidence="1" type="primary">ligA</name>
    <name type="ordered locus">Cagg_3660</name>
</gene>